<name>ARCB_ECOLI</name>
<dbReference type="EC" id="2.7.13.3"/>
<dbReference type="EMBL" id="X53315">
    <property type="protein sequence ID" value="CAA37397.1"/>
    <property type="molecule type" value="Genomic_DNA"/>
</dbReference>
<dbReference type="EMBL" id="U18997">
    <property type="protein sequence ID" value="AAA58012.1"/>
    <property type="molecule type" value="Genomic_DNA"/>
</dbReference>
<dbReference type="EMBL" id="U00096">
    <property type="protein sequence ID" value="AAT48172.1"/>
    <property type="molecule type" value="Genomic_DNA"/>
</dbReference>
<dbReference type="EMBL" id="AP009048">
    <property type="protein sequence ID" value="BAE77254.1"/>
    <property type="molecule type" value="Genomic_DNA"/>
</dbReference>
<dbReference type="PIR" id="D65112">
    <property type="entry name" value="RGECAR"/>
</dbReference>
<dbReference type="RefSeq" id="WP_000809774.1">
    <property type="nucleotide sequence ID" value="NZ_STEB01000012.1"/>
</dbReference>
<dbReference type="RefSeq" id="YP_026207.1">
    <property type="nucleotide sequence ID" value="NC_000913.3"/>
</dbReference>
<dbReference type="PDB" id="1A0B">
    <property type="method" value="X-ray"/>
    <property type="resolution" value="2.06 A"/>
    <property type="chains" value="A=654-778"/>
</dbReference>
<dbReference type="PDB" id="1BDJ">
    <property type="method" value="X-ray"/>
    <property type="resolution" value="2.68 A"/>
    <property type="chains" value="B=654-778"/>
</dbReference>
<dbReference type="PDB" id="1FR0">
    <property type="method" value="NMR"/>
    <property type="chains" value="A=654-778"/>
</dbReference>
<dbReference type="PDB" id="2A0B">
    <property type="method" value="X-ray"/>
    <property type="resolution" value="1.57 A"/>
    <property type="chains" value="A=654-778"/>
</dbReference>
<dbReference type="PDB" id="2KSD">
    <property type="method" value="NMR"/>
    <property type="chains" value="A=1-115"/>
</dbReference>
<dbReference type="PDBsum" id="1A0B"/>
<dbReference type="PDBsum" id="1BDJ"/>
<dbReference type="PDBsum" id="1FR0"/>
<dbReference type="PDBsum" id="2A0B"/>
<dbReference type="PDBsum" id="2KSD"/>
<dbReference type="BMRB" id="P0AEC3"/>
<dbReference type="SMR" id="P0AEC3"/>
<dbReference type="BioGRID" id="4263422">
    <property type="interactions" value="416"/>
</dbReference>
<dbReference type="BioGRID" id="852196">
    <property type="interactions" value="2"/>
</dbReference>
<dbReference type="DIP" id="DIP-47915N"/>
<dbReference type="FunCoup" id="P0AEC3">
    <property type="interactions" value="326"/>
</dbReference>
<dbReference type="IntAct" id="P0AEC3">
    <property type="interactions" value="7"/>
</dbReference>
<dbReference type="MINT" id="P0AEC3"/>
<dbReference type="STRING" id="511145.b3210"/>
<dbReference type="iPTMnet" id="P0AEC3"/>
<dbReference type="jPOST" id="P0AEC3"/>
<dbReference type="PaxDb" id="511145-b3210"/>
<dbReference type="EnsemblBacteria" id="AAT48172">
    <property type="protein sequence ID" value="AAT48172"/>
    <property type="gene ID" value="b3210"/>
</dbReference>
<dbReference type="GeneID" id="93778771"/>
<dbReference type="GeneID" id="947887"/>
<dbReference type="KEGG" id="ecj:JW5536"/>
<dbReference type="KEGG" id="eco:b3210"/>
<dbReference type="KEGG" id="ecoc:C3026_17465"/>
<dbReference type="PATRIC" id="fig|1411691.4.peg.3519"/>
<dbReference type="EchoBASE" id="EB0060"/>
<dbReference type="eggNOG" id="COG0784">
    <property type="taxonomic scope" value="Bacteria"/>
</dbReference>
<dbReference type="eggNOG" id="COG2198">
    <property type="taxonomic scope" value="Bacteria"/>
</dbReference>
<dbReference type="eggNOG" id="COG5002">
    <property type="taxonomic scope" value="Bacteria"/>
</dbReference>
<dbReference type="HOGENOM" id="CLU_000445_114_15_6"/>
<dbReference type="InParanoid" id="P0AEC3"/>
<dbReference type="OMA" id="AMLEQYI"/>
<dbReference type="OrthoDB" id="9770795at2"/>
<dbReference type="PhylomeDB" id="P0AEC3"/>
<dbReference type="BioCyc" id="EcoCyc:ARCB-MONOMER"/>
<dbReference type="BioCyc" id="MetaCyc:ARCB-MONOMER"/>
<dbReference type="BRENDA" id="2.7.13.3">
    <property type="organism ID" value="2026"/>
</dbReference>
<dbReference type="EvolutionaryTrace" id="P0AEC3"/>
<dbReference type="PRO" id="PR:P0AEC3"/>
<dbReference type="Proteomes" id="UP000000625">
    <property type="component" value="Chromosome"/>
</dbReference>
<dbReference type="GO" id="GO:0005829">
    <property type="term" value="C:cytosol"/>
    <property type="evidence" value="ECO:0000303"/>
    <property type="project" value="EcoCyc"/>
</dbReference>
<dbReference type="GO" id="GO:0005886">
    <property type="term" value="C:plasma membrane"/>
    <property type="evidence" value="ECO:0000314"/>
    <property type="project" value="EcoCyc"/>
</dbReference>
<dbReference type="GO" id="GO:0005524">
    <property type="term" value="F:ATP binding"/>
    <property type="evidence" value="ECO:0007669"/>
    <property type="project" value="UniProtKB-KW"/>
</dbReference>
<dbReference type="GO" id="GO:0004721">
    <property type="term" value="F:phosphoprotein phosphatase activity"/>
    <property type="evidence" value="ECO:0000314"/>
    <property type="project" value="EcoCyc"/>
</dbReference>
<dbReference type="GO" id="GO:0000155">
    <property type="term" value="F:phosphorelay sensor kinase activity"/>
    <property type="evidence" value="ECO:0000314"/>
    <property type="project" value="EcoCyc"/>
</dbReference>
<dbReference type="GO" id="GO:0046777">
    <property type="term" value="P:protein autophosphorylation"/>
    <property type="evidence" value="ECO:0000315"/>
    <property type="project" value="CACAO"/>
</dbReference>
<dbReference type="GO" id="GO:0006355">
    <property type="term" value="P:regulation of DNA-templated transcription"/>
    <property type="evidence" value="ECO:0007669"/>
    <property type="project" value="InterPro"/>
</dbReference>
<dbReference type="GO" id="GO:0070482">
    <property type="term" value="P:response to oxygen levels"/>
    <property type="evidence" value="ECO:0000314"/>
    <property type="project" value="EcoCyc"/>
</dbReference>
<dbReference type="GO" id="GO:0007165">
    <property type="term" value="P:signal transduction"/>
    <property type="evidence" value="ECO:0000314"/>
    <property type="project" value="EcoCyc"/>
</dbReference>
<dbReference type="CDD" id="cd16922">
    <property type="entry name" value="HATPase_EvgS-ArcB-TorS-like"/>
    <property type="match status" value="1"/>
</dbReference>
<dbReference type="CDD" id="cd00082">
    <property type="entry name" value="HisKA"/>
    <property type="match status" value="1"/>
</dbReference>
<dbReference type="CDD" id="cd00088">
    <property type="entry name" value="HPT"/>
    <property type="match status" value="1"/>
</dbReference>
<dbReference type="CDD" id="cd00130">
    <property type="entry name" value="PAS"/>
    <property type="match status" value="1"/>
</dbReference>
<dbReference type="CDD" id="cd17546">
    <property type="entry name" value="REC_hyHK_CKI1_RcsC-like"/>
    <property type="match status" value="1"/>
</dbReference>
<dbReference type="FunFam" id="1.10.287.130:FF:000016">
    <property type="entry name" value="Aerobic respiration control sensor protein"/>
    <property type="match status" value="1"/>
</dbReference>
<dbReference type="FunFam" id="1.10.287.970:FF:000001">
    <property type="entry name" value="Aerobic respiration control sensor protein"/>
    <property type="match status" value="1"/>
</dbReference>
<dbReference type="FunFam" id="1.20.120.160:FF:000003">
    <property type="entry name" value="Aerobic respiration control sensor protein"/>
    <property type="match status" value="1"/>
</dbReference>
<dbReference type="FunFam" id="3.30.450.20:FF:000032">
    <property type="entry name" value="Aerobic respiration control sensor protein"/>
    <property type="match status" value="1"/>
</dbReference>
<dbReference type="FunFam" id="3.30.565.10:FF:000025">
    <property type="entry name" value="Aerobic respiration control sensor protein"/>
    <property type="match status" value="1"/>
</dbReference>
<dbReference type="FunFam" id="3.40.50.2300:FF:000107">
    <property type="entry name" value="Aerobic respiration control sensor protein"/>
    <property type="match status" value="1"/>
</dbReference>
<dbReference type="Gene3D" id="1.10.287.130">
    <property type="match status" value="1"/>
</dbReference>
<dbReference type="Gene3D" id="3.40.50.2300">
    <property type="match status" value="1"/>
</dbReference>
<dbReference type="Gene3D" id="1.10.287.970">
    <property type="entry name" value="His Kinase A (phosphoacceptor) domain"/>
    <property type="match status" value="1"/>
</dbReference>
<dbReference type="Gene3D" id="3.30.565.10">
    <property type="entry name" value="Histidine kinase-like ATPase, C-terminal domain"/>
    <property type="match status" value="1"/>
</dbReference>
<dbReference type="Gene3D" id="1.20.120.160">
    <property type="entry name" value="HPT domain"/>
    <property type="match status" value="1"/>
</dbReference>
<dbReference type="Gene3D" id="3.30.450.20">
    <property type="entry name" value="PAS domain"/>
    <property type="match status" value="1"/>
</dbReference>
<dbReference type="InterPro" id="IPR027460">
    <property type="entry name" value="ArcB_TM_sf"/>
</dbReference>
<dbReference type="InterPro" id="IPR011006">
    <property type="entry name" value="CheY-like_superfamily"/>
</dbReference>
<dbReference type="InterPro" id="IPR036890">
    <property type="entry name" value="HATPase_C_sf"/>
</dbReference>
<dbReference type="InterPro" id="IPR005467">
    <property type="entry name" value="His_kinase_dom"/>
</dbReference>
<dbReference type="InterPro" id="IPR003661">
    <property type="entry name" value="HisK_dim/P_dom"/>
</dbReference>
<dbReference type="InterPro" id="IPR036097">
    <property type="entry name" value="HisK_dim/P_sf"/>
</dbReference>
<dbReference type="InterPro" id="IPR040642">
    <property type="entry name" value="HKR_ArcB_TM"/>
</dbReference>
<dbReference type="InterPro" id="IPR036641">
    <property type="entry name" value="HPT_dom_sf"/>
</dbReference>
<dbReference type="InterPro" id="IPR000014">
    <property type="entry name" value="PAS"/>
</dbReference>
<dbReference type="InterPro" id="IPR000700">
    <property type="entry name" value="PAS-assoc_C"/>
</dbReference>
<dbReference type="InterPro" id="IPR035965">
    <property type="entry name" value="PAS-like_dom_sf"/>
</dbReference>
<dbReference type="InterPro" id="IPR013767">
    <property type="entry name" value="PAS_fold"/>
</dbReference>
<dbReference type="InterPro" id="IPR004358">
    <property type="entry name" value="Sig_transdc_His_kin-like_C"/>
</dbReference>
<dbReference type="InterPro" id="IPR008207">
    <property type="entry name" value="Sig_transdc_His_kin_Hpt_dom"/>
</dbReference>
<dbReference type="InterPro" id="IPR014409">
    <property type="entry name" value="Sig_transdc_His_kin_hyb_ArcB"/>
</dbReference>
<dbReference type="InterPro" id="IPR001789">
    <property type="entry name" value="Sig_transdc_resp-reg_receiver"/>
</dbReference>
<dbReference type="NCBIfam" id="NF008302">
    <property type="entry name" value="PRK11091.1"/>
    <property type="match status" value="1"/>
</dbReference>
<dbReference type="NCBIfam" id="TIGR00229">
    <property type="entry name" value="sensory_box"/>
    <property type="match status" value="1"/>
</dbReference>
<dbReference type="PANTHER" id="PTHR43047:SF72">
    <property type="entry name" value="OSMOSENSING HISTIDINE PROTEIN KINASE SLN1"/>
    <property type="match status" value="1"/>
</dbReference>
<dbReference type="PANTHER" id="PTHR43047">
    <property type="entry name" value="TWO-COMPONENT HISTIDINE PROTEIN KINASE"/>
    <property type="match status" value="1"/>
</dbReference>
<dbReference type="Pfam" id="PF02518">
    <property type="entry name" value="HATPase_c"/>
    <property type="match status" value="1"/>
</dbReference>
<dbReference type="Pfam" id="PF00512">
    <property type="entry name" value="HisKA"/>
    <property type="match status" value="1"/>
</dbReference>
<dbReference type="Pfam" id="PF18415">
    <property type="entry name" value="HKR_ArcB_TM"/>
    <property type="match status" value="1"/>
</dbReference>
<dbReference type="Pfam" id="PF01627">
    <property type="entry name" value="Hpt"/>
    <property type="match status" value="1"/>
</dbReference>
<dbReference type="Pfam" id="PF00989">
    <property type="entry name" value="PAS"/>
    <property type="match status" value="1"/>
</dbReference>
<dbReference type="Pfam" id="PF00072">
    <property type="entry name" value="Response_reg"/>
    <property type="match status" value="1"/>
</dbReference>
<dbReference type="PIRSF" id="PIRSF003182">
    <property type="entry name" value="ArcB"/>
    <property type="match status" value="1"/>
</dbReference>
<dbReference type="PRINTS" id="PR00344">
    <property type="entry name" value="BCTRLSENSOR"/>
</dbReference>
<dbReference type="SMART" id="SM00387">
    <property type="entry name" value="HATPase_c"/>
    <property type="match status" value="1"/>
</dbReference>
<dbReference type="SMART" id="SM00388">
    <property type="entry name" value="HisKA"/>
    <property type="match status" value="1"/>
</dbReference>
<dbReference type="SMART" id="SM00073">
    <property type="entry name" value="HPT"/>
    <property type="match status" value="1"/>
</dbReference>
<dbReference type="SMART" id="SM00091">
    <property type="entry name" value="PAS"/>
    <property type="match status" value="1"/>
</dbReference>
<dbReference type="SMART" id="SM00448">
    <property type="entry name" value="REC"/>
    <property type="match status" value="1"/>
</dbReference>
<dbReference type="SUPFAM" id="SSF55874">
    <property type="entry name" value="ATPase domain of HSP90 chaperone/DNA topoisomerase II/histidine kinase"/>
    <property type="match status" value="1"/>
</dbReference>
<dbReference type="SUPFAM" id="SSF52172">
    <property type="entry name" value="CheY-like"/>
    <property type="match status" value="1"/>
</dbReference>
<dbReference type="SUPFAM" id="SSF47226">
    <property type="entry name" value="Histidine-containing phosphotransfer domain, HPT domain"/>
    <property type="match status" value="1"/>
</dbReference>
<dbReference type="SUPFAM" id="SSF47384">
    <property type="entry name" value="Homodimeric domain of signal transducing histidine kinase"/>
    <property type="match status" value="1"/>
</dbReference>
<dbReference type="SUPFAM" id="SSF55785">
    <property type="entry name" value="PYP-like sensor domain (PAS domain)"/>
    <property type="match status" value="1"/>
</dbReference>
<dbReference type="PROSITE" id="PS50109">
    <property type="entry name" value="HIS_KIN"/>
    <property type="match status" value="1"/>
</dbReference>
<dbReference type="PROSITE" id="PS50894">
    <property type="entry name" value="HPT"/>
    <property type="match status" value="1"/>
</dbReference>
<dbReference type="PROSITE" id="PS50113">
    <property type="entry name" value="PAC"/>
    <property type="match status" value="1"/>
</dbReference>
<dbReference type="PROSITE" id="PS50112">
    <property type="entry name" value="PAS"/>
    <property type="match status" value="1"/>
</dbReference>
<dbReference type="PROSITE" id="PS50110">
    <property type="entry name" value="RESPONSE_REGULATORY"/>
    <property type="match status" value="1"/>
</dbReference>
<evidence type="ECO:0000255" key="1"/>
<evidence type="ECO:0000255" key="2">
    <source>
        <dbReference type="PROSITE-ProRule" id="PRU00107"/>
    </source>
</evidence>
<evidence type="ECO:0000255" key="3">
    <source>
        <dbReference type="PROSITE-ProRule" id="PRU00110"/>
    </source>
</evidence>
<evidence type="ECO:0000255" key="4">
    <source>
        <dbReference type="PROSITE-ProRule" id="PRU00140"/>
    </source>
</evidence>
<evidence type="ECO:0000255" key="5">
    <source>
        <dbReference type="PROSITE-ProRule" id="PRU00141"/>
    </source>
</evidence>
<evidence type="ECO:0000255" key="6">
    <source>
        <dbReference type="PROSITE-ProRule" id="PRU00169"/>
    </source>
</evidence>
<evidence type="ECO:0000269" key="7">
    <source>
    </source>
</evidence>
<evidence type="ECO:0000269" key="8">
    <source>
    </source>
</evidence>
<evidence type="ECO:0000305" key="9"/>
<evidence type="ECO:0000305" key="10">
    <source>
    </source>
</evidence>
<evidence type="ECO:0007829" key="11">
    <source>
        <dbReference type="PDB" id="2A0B"/>
    </source>
</evidence>
<evidence type="ECO:0007829" key="12">
    <source>
        <dbReference type="PDB" id="2KSD"/>
    </source>
</evidence>
<organism>
    <name type="scientific">Escherichia coli (strain K12)</name>
    <dbReference type="NCBI Taxonomy" id="83333"/>
    <lineage>
        <taxon>Bacteria</taxon>
        <taxon>Pseudomonadati</taxon>
        <taxon>Pseudomonadota</taxon>
        <taxon>Gammaproteobacteria</taxon>
        <taxon>Enterobacterales</taxon>
        <taxon>Enterobacteriaceae</taxon>
        <taxon>Escherichia</taxon>
    </lineage>
</organism>
<gene>
    <name type="primary">arcB</name>
    <name type="ordered locus">b3210</name>
    <name type="ordered locus">JW5536</name>
</gene>
<feature type="chain" id="PRO_0000074684" description="Aerobic respiration control sensor protein ArcB">
    <location>
        <begin position="1"/>
        <end position="778"/>
    </location>
</feature>
<feature type="topological domain" description="Cytoplasmic" evidence="1">
    <location>
        <begin position="1"/>
        <end position="25"/>
    </location>
</feature>
<feature type="transmembrane region" description="Helical" evidence="1">
    <location>
        <begin position="26"/>
        <end position="46"/>
    </location>
</feature>
<feature type="topological domain" description="Periplasmic" evidence="1">
    <location>
        <begin position="47"/>
        <end position="57"/>
    </location>
</feature>
<feature type="transmembrane region" description="Helical" evidence="1">
    <location>
        <begin position="58"/>
        <end position="78"/>
    </location>
</feature>
<feature type="topological domain" description="Cytoplasmic" evidence="1">
    <location>
        <begin position="79"/>
        <end position="778"/>
    </location>
</feature>
<feature type="domain" description="PAS" evidence="4">
    <location>
        <begin position="153"/>
        <end position="223"/>
    </location>
</feature>
<feature type="domain" description="PAC" evidence="5">
    <location>
        <begin position="226"/>
        <end position="278"/>
    </location>
</feature>
<feature type="domain" description="Histidine kinase" evidence="2">
    <location>
        <begin position="289"/>
        <end position="507"/>
    </location>
</feature>
<feature type="domain" description="Response regulatory" evidence="6">
    <location>
        <begin position="527"/>
        <end position="643"/>
    </location>
</feature>
<feature type="domain" description="HPt" evidence="3">
    <location>
        <begin position="678"/>
        <end position="771"/>
    </location>
</feature>
<feature type="modified residue" description="Phosphohistidine; by autocatalysis" evidence="2 7">
    <location>
        <position position="292"/>
    </location>
</feature>
<feature type="modified residue" description="4-aspartylphosphate" evidence="9">
    <location>
        <position position="576"/>
    </location>
</feature>
<feature type="modified residue" description="Phosphohistidine" evidence="10">
    <location>
        <position position="717"/>
    </location>
</feature>
<feature type="mutagenesis site" description="Loss of activity." evidence="7">
    <original>H</original>
    <variation>Q</variation>
    <location>
        <position position="292"/>
    </location>
</feature>
<feature type="mutagenesis site" description="Loss of activity." evidence="7">
    <original>D</original>
    <variation>A</variation>
    <location>
        <position position="576"/>
    </location>
</feature>
<feature type="mutagenesis site" description="Loss of activity." evidence="7">
    <original>H</original>
    <variation>Q</variation>
    <location>
        <position position="717"/>
    </location>
</feature>
<feature type="sequence conflict" description="In Ref. 2; AAA58012." evidence="9" ref="2">
    <location>
        <begin position="469"/>
        <end position="470"/>
    </location>
</feature>
<feature type="helix" evidence="12">
    <location>
        <begin position="27"/>
        <end position="45"/>
    </location>
</feature>
<feature type="strand" evidence="12">
    <location>
        <begin position="50"/>
        <end position="54"/>
    </location>
</feature>
<feature type="turn" evidence="12">
    <location>
        <begin position="58"/>
        <end position="60"/>
    </location>
</feature>
<feature type="helix" evidence="12">
    <location>
        <begin position="61"/>
        <end position="78"/>
    </location>
</feature>
<feature type="helix" evidence="11">
    <location>
        <begin position="660"/>
        <end position="664"/>
    </location>
</feature>
<feature type="helix" evidence="11">
    <location>
        <begin position="667"/>
        <end position="676"/>
    </location>
</feature>
<feature type="helix" evidence="11">
    <location>
        <begin position="679"/>
        <end position="705"/>
    </location>
</feature>
<feature type="helix" evidence="11">
    <location>
        <begin position="709"/>
        <end position="725"/>
    </location>
</feature>
<feature type="helix" evidence="11">
    <location>
        <begin position="729"/>
        <end position="738"/>
    </location>
</feature>
<feature type="helix" evidence="11">
    <location>
        <begin position="746"/>
        <end position="775"/>
    </location>
</feature>
<sequence length="778" mass="87983">MKQIRLLAQYYVDLMMKLGLVRFSMLLALALVVLAIVVQMAVTMVLHGQVESIDVIRSIFFGLLITPWAVYFLSVVVEQLEESRQRLSRLVQKLEEMRERDLSLNVQLKDNIAQLNQEIAVREKAEAELQETFGQLKIEIKEREETQIQLEQQSSFLRSFLDASPDLVFYRNEDKEFSGCNRAMELLTGKSEKQLVHLKPADVYSPEAAAKVIETDEKVFRHNVSLTYEQWLDYPDGRKACFEIRKVPYYDRVGKRHGLMGFGRDITERKRYQDALERASRDKTTFISTISHELRTPLNGIVGLSRILLDTELTAEQEKYLKTIHVSAVTLGNIFNDIIDMDKMERRKVQLDNQPVDFTSFLADLENLSALQAQQKGLRFNLEPTLPLPHQVITDGTRLRQILWNLISNAVKFTQQGQVTVRVRYDEGDMLHFEVEDSGIGIPQDELDKIFAMYYQVKDSHGGKPATGTGIGLAVSRRLAKNMGGDITVTSEQGKGSTFTLTIHAPSVAEEVDDAFDEDDMPLPALNVLLVEDIELNVIVARSVLEKLGNSVDVAMTGKAALEMFKPGEYDLVLLDIQLPDMTGLDISRELTKRYPREDLPPLVALTANVLKDKQEYLNAGMDDVLSKPLSVPALTAMIKKFWDTQDDEESTVTTEENSKSEALLDIPMLEQYLELVGPKLITDGLAVFEKMMPGYVSVLESNLTAQDKKGIVEEGHKIKGAAGSVGLRHLQQLGQQIQSPDLPAWEDNVGEWIEEMKEEWRHDVEVLKAWVAKATKK</sequence>
<accession>P0AEC3</accession>
<accession>P22763</accession>
<accession>Q2M902</accession>
<reference key="1">
    <citation type="journal article" date="1990" name="Mol. Microbiol.">
        <title>The arcB gene of Escherichia coli encodes a sensor-regulator protein for anaerobic repression of the arc modulon.</title>
        <authorList>
            <person name="Iuchi S."/>
            <person name="Matsuda Z."/>
            <person name="Fujiwara T."/>
            <person name="Lin E.C.C."/>
        </authorList>
    </citation>
    <scope>NUCLEOTIDE SEQUENCE [GENOMIC DNA]</scope>
    <source>
        <strain>K12</strain>
    </source>
</reference>
<reference key="2">
    <citation type="journal article" date="1997" name="Science">
        <title>The complete genome sequence of Escherichia coli K-12.</title>
        <authorList>
            <person name="Blattner F.R."/>
            <person name="Plunkett G. III"/>
            <person name="Bloch C.A."/>
            <person name="Perna N.T."/>
            <person name="Burland V."/>
            <person name="Riley M."/>
            <person name="Collado-Vides J."/>
            <person name="Glasner J.D."/>
            <person name="Rode C.K."/>
            <person name="Mayhew G.F."/>
            <person name="Gregor J."/>
            <person name="Davis N.W."/>
            <person name="Kirkpatrick H.A."/>
            <person name="Goeden M.A."/>
            <person name="Rose D.J."/>
            <person name="Mau B."/>
            <person name="Shao Y."/>
        </authorList>
    </citation>
    <scope>NUCLEOTIDE SEQUENCE [LARGE SCALE GENOMIC DNA]</scope>
    <source>
        <strain>K12 / MG1655 / ATCC 47076</strain>
    </source>
</reference>
<reference key="3">
    <citation type="journal article" date="2006" name="Nucleic Acids Res.">
        <title>Escherichia coli K-12: a cooperatively developed annotation snapshot -- 2005.</title>
        <authorList>
            <person name="Riley M."/>
            <person name="Abe T."/>
            <person name="Arnaud M.B."/>
            <person name="Berlyn M.K.B."/>
            <person name="Blattner F.R."/>
            <person name="Chaudhuri R.R."/>
            <person name="Glasner J.D."/>
            <person name="Horiuchi T."/>
            <person name="Keseler I.M."/>
            <person name="Kosuge T."/>
            <person name="Mori H."/>
            <person name="Perna N.T."/>
            <person name="Plunkett G. III"/>
            <person name="Rudd K.E."/>
            <person name="Serres M.H."/>
            <person name="Thomas G.H."/>
            <person name="Thomson N.R."/>
            <person name="Wishart D."/>
            <person name="Wanner B.L."/>
        </authorList>
    </citation>
    <scope>SEQUENCE REVISION TO 469-470</scope>
</reference>
<reference key="4">
    <citation type="journal article" date="2006" name="Mol. Syst. Biol.">
        <title>Highly accurate genome sequences of Escherichia coli K-12 strains MG1655 and W3110.</title>
        <authorList>
            <person name="Hayashi K."/>
            <person name="Morooka N."/>
            <person name="Yamamoto Y."/>
            <person name="Fujita K."/>
            <person name="Isono K."/>
            <person name="Choi S."/>
            <person name="Ohtsubo E."/>
            <person name="Baba T."/>
            <person name="Wanner B.L."/>
            <person name="Mori H."/>
            <person name="Horiuchi T."/>
        </authorList>
    </citation>
    <scope>NUCLEOTIDE SEQUENCE [LARGE SCALE GENOMIC DNA]</scope>
    <source>
        <strain>K12 / W3110 / ATCC 27325 / DSM 5911</strain>
    </source>
</reference>
<reference key="5">
    <citation type="journal article" date="1997" name="J. Bacteriol.">
        <title>In vitro phosphorylation study of the arc two-component signal transduction system of Escherichia coli.</title>
        <authorList>
            <person name="Georgellis D."/>
            <person name="Lynch A.S."/>
            <person name="Lin E.C.C."/>
        </authorList>
    </citation>
    <scope>CHARACTERIZATION</scope>
    <source>
        <strain>M15</strain>
    </source>
</reference>
<reference key="6">
    <citation type="journal article" date="1998" name="J. Biol. Chem.">
        <title>Signal decay through a reverse phosphorelay in the arc two-component signal transduction system.</title>
        <authorList>
            <person name="Georgellis D."/>
            <person name="Kwon O."/>
            <person name="De Wulf P."/>
            <person name="Lin E.C.C."/>
        </authorList>
    </citation>
    <scope>CHARACTERIZATION</scope>
    <source>
        <strain>M15</strain>
    </source>
</reference>
<reference key="7">
    <citation type="journal article" date="2000" name="J. Bacteriol.">
        <title>Phosphorelay as the sole physiological route of signal transmission by the arc two-component system of Escherichia coli.</title>
        <authorList>
            <person name="Kwon O."/>
            <person name="Georgellis D."/>
            <person name="Lin E.C.C."/>
        </authorList>
    </citation>
    <scope>PHOSPHORYLATION AT HIS-292 AND HIS-717</scope>
    <scope>MUTAGENESIS OF HIS-292; ASP-576 AND HIS-717</scope>
    <source>
        <strain>K12 / MC4100 / ATCC 35695 / DSM 6574</strain>
    </source>
</reference>
<reference key="8">
    <citation type="journal article" date="2005" name="Science">
        <title>Global topology analysis of the Escherichia coli inner membrane proteome.</title>
        <authorList>
            <person name="Daley D.O."/>
            <person name="Rapp M."/>
            <person name="Granseth E."/>
            <person name="Melen K."/>
            <person name="Drew D."/>
            <person name="von Heijne G."/>
        </authorList>
    </citation>
    <scope>SUBCELLULAR LOCATION</scope>
    <source>
        <strain>K12 / MG1655 / ATCC 47076</strain>
    </source>
</reference>
<reference key="9">
    <citation type="journal article" date="1997" name="Cell">
        <title>Insights into multistep phosphorelay from the crystal structure of the C-terminal HPt domain of ArcB.</title>
        <authorList>
            <person name="Kato M."/>
            <person name="Mizuno T."/>
            <person name="Shimizu T."/>
            <person name="Hakoshima T."/>
        </authorList>
    </citation>
    <scope>X-RAY CRYSTALLOGRAPHY (2.06 ANGSTROMS) OF 660-778</scope>
</reference>
<reference key="10">
    <citation type="journal article" date="1998" name="Acta Crystallogr. D">
        <title>Crystallization of a complex between a novel C-terminal transmitter, HPt domain, of the anaerobic sensor kinase ArcB and the chemotaxis response regulator CheY.</title>
        <authorList>
            <person name="Kato M."/>
            <person name="Mizuno T."/>
            <person name="Hakoshima T."/>
        </authorList>
    </citation>
    <scope>X-RAY CRYSTALLOGRAPHY (2.7 ANGSTROMS) OF 659-776 IN COMPLEX WITH CHEY</scope>
</reference>
<reference key="11">
    <citation type="journal article" date="1999" name="Acta Crystallogr. D">
        <title>Refined structure of the histidine-containing-phosphotransfer (HPt) domain of the anaerobic sensor kinase ArcB from Escherichia coli at 1.57-A resolution.</title>
        <authorList>
            <person name="Kato M."/>
            <person name="Mizuno T."/>
            <person name="Shimizu T."/>
            <person name="Hakoshima T."/>
        </authorList>
    </citation>
    <scope>X-RAY CRYSTALLOGRAPHY (1.57 ANGSTROMS) OF 659-776</scope>
</reference>
<protein>
    <recommendedName>
        <fullName>Aerobic respiration control sensor protein ArcB</fullName>
        <ecNumber>2.7.13.3</ecNumber>
    </recommendedName>
</protein>
<proteinExistence type="evidence at protein level"/>
<comment type="function">
    <text>Member of the two-component regulatory system ArcB/ArcA. Sensor-regulator protein for anaerobic repression of the arc modulon. Activates ArcA via a four-step phosphorelay. ArcB can also dephosphorylate ArcA by a reverse phosphorelay involving His-717 and Asp-576.</text>
</comment>
<comment type="catalytic activity">
    <reaction>
        <text>ATP + protein L-histidine = ADP + protein N-phospho-L-histidine.</text>
        <dbReference type="EC" id="2.7.13.3"/>
    </reaction>
</comment>
<comment type="interaction">
    <interactant intactId="EBI-557109">
        <id>P0AEC3</id>
    </interactant>
    <interactant intactId="EBI-1134561">
        <id>P0AFN2</id>
        <label>pspC</label>
    </interactant>
    <organismsDiffer>false</organismsDiffer>
    <experiments>3</experiments>
</comment>
<comment type="subcellular location">
    <subcellularLocation>
        <location evidence="8">Cell inner membrane</location>
        <topology evidence="8">Multi-pass membrane protein</topology>
    </subcellularLocation>
</comment>
<comment type="PTM">
    <text>Activation requires a sequential transfer of a phosphate group from a His in the primary transmitter domain, to an Asp in the receiver domain and to a His in the secondary transmitter domain.</text>
</comment>
<keyword id="KW-0002">3D-structure</keyword>
<keyword id="KW-0067">ATP-binding</keyword>
<keyword id="KW-0997">Cell inner membrane</keyword>
<keyword id="KW-1003">Cell membrane</keyword>
<keyword id="KW-0418">Kinase</keyword>
<keyword id="KW-0472">Membrane</keyword>
<keyword id="KW-0547">Nucleotide-binding</keyword>
<keyword id="KW-0597">Phosphoprotein</keyword>
<keyword id="KW-1185">Reference proteome</keyword>
<keyword id="KW-0804">Transcription</keyword>
<keyword id="KW-0805">Transcription regulation</keyword>
<keyword id="KW-0808">Transferase</keyword>
<keyword id="KW-0812">Transmembrane</keyword>
<keyword id="KW-1133">Transmembrane helix</keyword>
<keyword id="KW-0902">Two-component regulatory system</keyword>